<dbReference type="EMBL" id="AE016853">
    <property type="protein sequence ID" value="AAO54765.1"/>
    <property type="molecule type" value="Genomic_DNA"/>
</dbReference>
<dbReference type="RefSeq" id="NP_791070.1">
    <property type="nucleotide sequence ID" value="NC_004578.1"/>
</dbReference>
<dbReference type="RefSeq" id="WP_003376036.1">
    <property type="nucleotide sequence ID" value="NC_004578.1"/>
</dbReference>
<dbReference type="SMR" id="Q887Q1"/>
<dbReference type="STRING" id="223283.PSPTO_1240"/>
<dbReference type="GeneID" id="61792620"/>
<dbReference type="KEGG" id="pst:PSPTO_1240"/>
<dbReference type="PATRIC" id="fig|223283.9.peg.1261"/>
<dbReference type="eggNOG" id="COG0790">
    <property type="taxonomic scope" value="Bacteria"/>
</dbReference>
<dbReference type="HOGENOM" id="CLU_595617_0_0_6"/>
<dbReference type="OrthoDB" id="6383809at2"/>
<dbReference type="PhylomeDB" id="Q887Q1"/>
<dbReference type="UniPathway" id="UPA00286"/>
<dbReference type="Proteomes" id="UP000002515">
    <property type="component" value="Chromosome"/>
</dbReference>
<dbReference type="GO" id="GO:0009279">
    <property type="term" value="C:cell outer membrane"/>
    <property type="evidence" value="ECO:0007669"/>
    <property type="project" value="UniProtKB-SubCell"/>
</dbReference>
<dbReference type="GO" id="GO:0042121">
    <property type="term" value="P:alginic acid biosynthetic process"/>
    <property type="evidence" value="ECO:0007669"/>
    <property type="project" value="UniProtKB-UniPathway"/>
</dbReference>
<dbReference type="Gene3D" id="1.25.40.10">
    <property type="entry name" value="Tetratricopeptide repeat domain"/>
    <property type="match status" value="1"/>
</dbReference>
<dbReference type="InterPro" id="IPR053440">
    <property type="entry name" value="Alginate_biosynth_AlgK"/>
</dbReference>
<dbReference type="InterPro" id="IPR006597">
    <property type="entry name" value="Sel1-like"/>
</dbReference>
<dbReference type="InterPro" id="IPR050767">
    <property type="entry name" value="Sel1_AlgK"/>
</dbReference>
<dbReference type="InterPro" id="IPR011990">
    <property type="entry name" value="TPR-like_helical_dom_sf"/>
</dbReference>
<dbReference type="NCBIfam" id="NF038194">
    <property type="entry name" value="AlgK_TPR_lipo"/>
    <property type="match status" value="1"/>
</dbReference>
<dbReference type="PANTHER" id="PTHR11102:SF160">
    <property type="entry name" value="ERAD-ASSOCIATED E3 UBIQUITIN-PROTEIN LIGASE COMPONENT HRD3"/>
    <property type="match status" value="1"/>
</dbReference>
<dbReference type="PANTHER" id="PTHR11102">
    <property type="entry name" value="SEL-1-LIKE PROTEIN"/>
    <property type="match status" value="1"/>
</dbReference>
<dbReference type="SMART" id="SM00671">
    <property type="entry name" value="SEL1"/>
    <property type="match status" value="4"/>
</dbReference>
<dbReference type="SUPFAM" id="SSF81901">
    <property type="entry name" value="HCP-like"/>
    <property type="match status" value="2"/>
</dbReference>
<dbReference type="PROSITE" id="PS51257">
    <property type="entry name" value="PROKAR_LIPOPROTEIN"/>
    <property type="match status" value="1"/>
</dbReference>
<reference key="1">
    <citation type="journal article" date="2003" name="Proc. Natl. Acad. Sci. U.S.A.">
        <title>The complete genome sequence of the Arabidopsis and tomato pathogen Pseudomonas syringae pv. tomato DC3000.</title>
        <authorList>
            <person name="Buell C.R."/>
            <person name="Joardar V."/>
            <person name="Lindeberg M."/>
            <person name="Selengut J."/>
            <person name="Paulsen I.T."/>
            <person name="Gwinn M.L."/>
            <person name="Dodson R.J."/>
            <person name="DeBoy R.T."/>
            <person name="Durkin A.S."/>
            <person name="Kolonay J.F."/>
            <person name="Madupu R."/>
            <person name="Daugherty S.C."/>
            <person name="Brinkac L.M."/>
            <person name="Beanan M.J."/>
            <person name="Haft D.H."/>
            <person name="Nelson W.C."/>
            <person name="Davidsen T.M."/>
            <person name="Zafar N."/>
            <person name="Zhou L."/>
            <person name="Liu J."/>
            <person name="Yuan Q."/>
            <person name="Khouri H.M."/>
            <person name="Fedorova N.B."/>
            <person name="Tran B."/>
            <person name="Russell D."/>
            <person name="Berry K.J."/>
            <person name="Utterback T.R."/>
            <person name="Van Aken S.E."/>
            <person name="Feldblyum T.V."/>
            <person name="D'Ascenzo M."/>
            <person name="Deng W.-L."/>
            <person name="Ramos A.R."/>
            <person name="Alfano J.R."/>
            <person name="Cartinhour S."/>
            <person name="Chatterjee A.K."/>
            <person name="Delaney T.P."/>
            <person name="Lazarowitz S.G."/>
            <person name="Martin G.B."/>
            <person name="Schneider D.J."/>
            <person name="Tang X."/>
            <person name="Bender C.L."/>
            <person name="White O."/>
            <person name="Fraser C.M."/>
            <person name="Collmer A."/>
        </authorList>
    </citation>
    <scope>NUCLEOTIDE SEQUENCE [LARGE SCALE GENOMIC DNA]</scope>
    <source>
        <strain>ATCC BAA-871 / DC3000</strain>
    </source>
</reference>
<organism>
    <name type="scientific">Pseudomonas syringae pv. tomato (strain ATCC BAA-871 / DC3000)</name>
    <dbReference type="NCBI Taxonomy" id="223283"/>
    <lineage>
        <taxon>Bacteria</taxon>
        <taxon>Pseudomonadati</taxon>
        <taxon>Pseudomonadota</taxon>
        <taxon>Gammaproteobacteria</taxon>
        <taxon>Pseudomonadales</taxon>
        <taxon>Pseudomonadaceae</taxon>
        <taxon>Pseudomonas</taxon>
    </lineage>
</organism>
<evidence type="ECO:0000250" key="1"/>
<evidence type="ECO:0000255" key="2">
    <source>
        <dbReference type="PROSITE-ProRule" id="PRU00303"/>
    </source>
</evidence>
<evidence type="ECO:0000305" key="3"/>
<name>ALGK_PSESM</name>
<feature type="signal peptide" evidence="2">
    <location>
        <begin position="1"/>
        <end position="24"/>
    </location>
</feature>
<feature type="chain" id="PRO_0000020669" description="Alginate biosynthesis protein AlgK">
    <location>
        <begin position="25"/>
        <end position="470"/>
    </location>
</feature>
<feature type="lipid moiety-binding region" description="N-palmitoyl cysteine" evidence="2">
    <location>
        <position position="25"/>
    </location>
</feature>
<feature type="lipid moiety-binding region" description="S-diacylglycerol cysteine" evidence="2">
    <location>
        <position position="25"/>
    </location>
</feature>
<gene>
    <name type="primary">algK</name>
    <name type="ordered locus">PSPTO_1240</name>
</gene>
<proteinExistence type="inferred from homology"/>
<comment type="function">
    <text evidence="1">May be involved in the polymerization of mannuronate to alginate.</text>
</comment>
<comment type="pathway">
    <text>Glycan biosynthesis; alginate biosynthesis.</text>
</comment>
<comment type="subcellular location">
    <subcellularLocation>
        <location evidence="1">Cell outer membrane</location>
        <topology evidence="2">Lipid-anchor</topology>
        <orientation evidence="1">Periplasmic side</orientation>
    </subcellularLocation>
</comment>
<comment type="similarity">
    <text evidence="3">Belongs to the AlgK family.</text>
</comment>
<keyword id="KW-0016">Alginate biosynthesis</keyword>
<keyword id="KW-0998">Cell outer membrane</keyword>
<keyword id="KW-0449">Lipoprotein</keyword>
<keyword id="KW-0472">Membrane</keyword>
<keyword id="KW-0564">Palmitate</keyword>
<keyword id="KW-1185">Reference proteome</keyword>
<keyword id="KW-0732">Signal</keyword>
<accession>Q887Q1</accession>
<sequence>MNSPLRRLSTPTLLSLAVALGLSGCAGLPDQRLANEALKNGDTALAEQNYRQLADLGYSDAQVGLADIQVNTRDPALLKQAEATYRAAAQTSPRAQSRLGRLLAVKPDATEAEHREAEELLKKAFANGESGTLIPLAMLYLQYPHTFPEVNAQQKISQWRAAGYPEAGLAQVLLYRTQGTYAEHLDEVESICKQALSATDICYVELATVYQTRGQTEQQAALIAQLRSAHAAGRVNAQRVDSVARVLGDSTIGTPDEKTAQQLLEEVAPGYPISWVTLAKLLYDFPELGDVNKMMEYLNNGRAADQPRAELLLGRLYYEGKWVPADAVKAEEHLKKATATEISAHYYLGQIYRRGYLGQVYPQKAVDELLTAARGGQNSADFALAQLFSQGKGTLPDPVNAWVFAQLSLASETPQATELAQAMSTQLPPEKLATAKDLLAREQKVRGASATQNAMAMQALQEEKDGEEAL</sequence>
<protein>
    <recommendedName>
        <fullName>Alginate biosynthesis protein AlgK</fullName>
    </recommendedName>
</protein>